<evidence type="ECO:0000255" key="1">
    <source>
        <dbReference type="HAMAP-Rule" id="MF_00918"/>
    </source>
</evidence>
<comment type="subcellular location">
    <subcellularLocation>
        <location evidence="1">Cytoplasm</location>
    </subcellularLocation>
</comment>
<comment type="similarity">
    <text evidence="1">Belongs to the TACO1 family. YeeN subfamily.</text>
</comment>
<gene>
    <name type="ordered locus">BCE_0595</name>
</gene>
<accession>P62032</accession>
<feature type="chain" id="PRO_0000175753" description="Probable transcriptional regulatory protein BCE_0595">
    <location>
        <begin position="1"/>
        <end position="239"/>
    </location>
</feature>
<keyword id="KW-0963">Cytoplasm</keyword>
<keyword id="KW-0238">DNA-binding</keyword>
<keyword id="KW-0804">Transcription</keyword>
<keyword id="KW-0805">Transcription regulation</keyword>
<dbReference type="EMBL" id="AE017194">
    <property type="protein sequence ID" value="AAS39530.1"/>
    <property type="molecule type" value="Genomic_DNA"/>
</dbReference>
<dbReference type="SMR" id="P62032"/>
<dbReference type="KEGG" id="bca:BCE_0595"/>
<dbReference type="HOGENOM" id="CLU_062974_2_0_9"/>
<dbReference type="Proteomes" id="UP000002527">
    <property type="component" value="Chromosome"/>
</dbReference>
<dbReference type="GO" id="GO:0005829">
    <property type="term" value="C:cytosol"/>
    <property type="evidence" value="ECO:0007669"/>
    <property type="project" value="TreeGrafter"/>
</dbReference>
<dbReference type="GO" id="GO:0003677">
    <property type="term" value="F:DNA binding"/>
    <property type="evidence" value="ECO:0007669"/>
    <property type="project" value="UniProtKB-UniRule"/>
</dbReference>
<dbReference type="GO" id="GO:0006355">
    <property type="term" value="P:regulation of DNA-templated transcription"/>
    <property type="evidence" value="ECO:0007669"/>
    <property type="project" value="UniProtKB-UniRule"/>
</dbReference>
<dbReference type="FunFam" id="1.10.10.200:FF:000003">
    <property type="entry name" value="Probable transcriptional regulatory protein YeeN"/>
    <property type="match status" value="1"/>
</dbReference>
<dbReference type="FunFam" id="3.30.70.980:FF:000004">
    <property type="entry name" value="Probable transcriptional regulatory protein YeeN"/>
    <property type="match status" value="1"/>
</dbReference>
<dbReference type="Gene3D" id="1.10.10.200">
    <property type="match status" value="1"/>
</dbReference>
<dbReference type="Gene3D" id="3.30.70.980">
    <property type="match status" value="2"/>
</dbReference>
<dbReference type="HAMAP" id="MF_00693">
    <property type="entry name" value="Transcrip_reg_TACO1"/>
    <property type="match status" value="1"/>
</dbReference>
<dbReference type="HAMAP" id="MF_00918">
    <property type="entry name" value="Transcrip_reg_TACO1_YeeN"/>
    <property type="match status" value="1"/>
</dbReference>
<dbReference type="InterPro" id="IPR017856">
    <property type="entry name" value="Integrase-like_N"/>
</dbReference>
<dbReference type="InterPro" id="IPR048300">
    <property type="entry name" value="TACO1_YebC-like_2nd/3rd_dom"/>
</dbReference>
<dbReference type="InterPro" id="IPR049083">
    <property type="entry name" value="TACO1_YebC_N"/>
</dbReference>
<dbReference type="InterPro" id="IPR002876">
    <property type="entry name" value="Transcrip_reg_TACO1-like"/>
</dbReference>
<dbReference type="InterPro" id="IPR026564">
    <property type="entry name" value="Transcrip_reg_TACO1-like_dom3"/>
</dbReference>
<dbReference type="InterPro" id="IPR026562">
    <property type="entry name" value="Transcrip_reg_TACO1_YeeN"/>
</dbReference>
<dbReference type="InterPro" id="IPR029072">
    <property type="entry name" value="YebC-like"/>
</dbReference>
<dbReference type="NCBIfam" id="NF001030">
    <property type="entry name" value="PRK00110.1"/>
    <property type="match status" value="1"/>
</dbReference>
<dbReference type="NCBIfam" id="NF009044">
    <property type="entry name" value="PRK12378.1"/>
    <property type="match status" value="1"/>
</dbReference>
<dbReference type="NCBIfam" id="TIGR01033">
    <property type="entry name" value="YebC/PmpR family DNA-binding transcriptional regulator"/>
    <property type="match status" value="1"/>
</dbReference>
<dbReference type="PANTHER" id="PTHR12532">
    <property type="entry name" value="TRANSLATIONAL ACTIVATOR OF CYTOCHROME C OXIDASE 1"/>
    <property type="match status" value="1"/>
</dbReference>
<dbReference type="PANTHER" id="PTHR12532:SF0">
    <property type="entry name" value="TRANSLATIONAL ACTIVATOR OF CYTOCHROME C OXIDASE 1"/>
    <property type="match status" value="1"/>
</dbReference>
<dbReference type="Pfam" id="PF20772">
    <property type="entry name" value="TACO1_YebC_N"/>
    <property type="match status" value="1"/>
</dbReference>
<dbReference type="Pfam" id="PF01709">
    <property type="entry name" value="Transcrip_reg"/>
    <property type="match status" value="1"/>
</dbReference>
<dbReference type="SUPFAM" id="SSF75625">
    <property type="entry name" value="YebC-like"/>
    <property type="match status" value="1"/>
</dbReference>
<reference key="1">
    <citation type="journal article" date="2004" name="Nucleic Acids Res.">
        <title>The genome sequence of Bacillus cereus ATCC 10987 reveals metabolic adaptations and a large plasmid related to Bacillus anthracis pXO1.</title>
        <authorList>
            <person name="Rasko D.A."/>
            <person name="Ravel J."/>
            <person name="Oekstad O.A."/>
            <person name="Helgason E."/>
            <person name="Cer R.Z."/>
            <person name="Jiang L."/>
            <person name="Shores K.A."/>
            <person name="Fouts D.E."/>
            <person name="Tourasse N.J."/>
            <person name="Angiuoli S.V."/>
            <person name="Kolonay J.F."/>
            <person name="Nelson W.C."/>
            <person name="Kolstoe A.-B."/>
            <person name="Fraser C.M."/>
            <person name="Read T.D."/>
        </authorList>
    </citation>
    <scope>NUCLEOTIDE SEQUENCE [LARGE SCALE GENOMIC DNA]</scope>
    <source>
        <strain>ATCC 10987 / NRS 248</strain>
    </source>
</reference>
<protein>
    <recommendedName>
        <fullName evidence="1">Probable transcriptional regulatory protein BCE_0595</fullName>
    </recommendedName>
</protein>
<sequence>MGRKWNNIKDKKASKDANTSRIYAKFGREIYVAAKQGEPDPESNQALRVVLERAKTYNVPRTIIDRAVEKAKGGSEENYDELRYEGFGPNGAMVIVDTLTNNVNRTAADVRAAFSKNGGNMGVNGSVAYMFDATAVIGLEGKTSDEVLEILMEADVDARDILEEEDAVIVYAEPDQFHAVQSALKDAGVEEFTVAELTMLAQNDVTLPEDAQAQFEKMVDALEDLEDVQQVYHNVDLGE</sequence>
<proteinExistence type="inferred from homology"/>
<name>Y595_BACC1</name>
<organism>
    <name type="scientific">Bacillus cereus (strain ATCC 10987 / NRS 248)</name>
    <dbReference type="NCBI Taxonomy" id="222523"/>
    <lineage>
        <taxon>Bacteria</taxon>
        <taxon>Bacillati</taxon>
        <taxon>Bacillota</taxon>
        <taxon>Bacilli</taxon>
        <taxon>Bacillales</taxon>
        <taxon>Bacillaceae</taxon>
        <taxon>Bacillus</taxon>
        <taxon>Bacillus cereus group</taxon>
    </lineage>
</organism>